<accession>Q9AB70</accession>
<organism>
    <name type="scientific">Caulobacter vibrioides (strain ATCC 19089 / CIP 103742 / CB 15)</name>
    <name type="common">Caulobacter crescentus</name>
    <dbReference type="NCBI Taxonomy" id="190650"/>
    <lineage>
        <taxon>Bacteria</taxon>
        <taxon>Pseudomonadati</taxon>
        <taxon>Pseudomonadota</taxon>
        <taxon>Alphaproteobacteria</taxon>
        <taxon>Caulobacterales</taxon>
        <taxon>Caulobacteraceae</taxon>
        <taxon>Caulobacter</taxon>
    </lineage>
</organism>
<keyword id="KW-0067">ATP-binding</keyword>
<keyword id="KW-0997">Cell inner membrane</keyword>
<keyword id="KW-1003">Cell membrane</keyword>
<keyword id="KW-0472">Membrane</keyword>
<keyword id="KW-0547">Nucleotide-binding</keyword>
<keyword id="KW-0918">Phosphonate transport</keyword>
<keyword id="KW-1185">Reference proteome</keyword>
<keyword id="KW-1278">Translocase</keyword>
<keyword id="KW-0813">Transport</keyword>
<evidence type="ECO:0000255" key="1">
    <source>
        <dbReference type="HAMAP-Rule" id="MF_01713"/>
    </source>
</evidence>
<proteinExistence type="inferred from homology"/>
<sequence>MTSDPVLSIRAASKTFGSRRALDAVSLDVNRGEMIALIGPSGSGKSTLLRSIDGLQTIDEGEGAITAFGGPVQARGKVSDQVRKARVRIGFIAQQFNLVGRLSLFSNVALGSLGRIPVVQGLLGWWPKETRDATMAALHRVGVSEYAAQRANTLSGGQQQRGAIARALVQKAKIILADEPVASLDPVSARKVMEILRDLNQSDGLTVVVTLHQVDYALRYCDRVVALKAGQKVYDGPASELKREKLIDIYGPEFEDVFWEGAPQ</sequence>
<gene>
    <name evidence="1" type="primary">phnC</name>
    <name type="ordered locus">CC_0361</name>
</gene>
<feature type="chain" id="PRO_0000092703" description="Phosphonates import ATP-binding protein PhnC">
    <location>
        <begin position="1"/>
        <end position="264"/>
    </location>
</feature>
<feature type="domain" description="ABC transporter" evidence="1">
    <location>
        <begin position="7"/>
        <end position="254"/>
    </location>
</feature>
<feature type="binding site" evidence="1">
    <location>
        <begin position="39"/>
        <end position="46"/>
    </location>
    <ligand>
        <name>ATP</name>
        <dbReference type="ChEBI" id="CHEBI:30616"/>
    </ligand>
</feature>
<dbReference type="EC" id="7.3.2.2" evidence="1"/>
<dbReference type="EMBL" id="AE005673">
    <property type="protein sequence ID" value="AAK22348.1"/>
    <property type="molecule type" value="Genomic_DNA"/>
</dbReference>
<dbReference type="PIR" id="H87293">
    <property type="entry name" value="H87293"/>
</dbReference>
<dbReference type="RefSeq" id="NP_419180.1">
    <property type="nucleotide sequence ID" value="NC_002696.2"/>
</dbReference>
<dbReference type="RefSeq" id="WP_010918250.1">
    <property type="nucleotide sequence ID" value="NC_002696.2"/>
</dbReference>
<dbReference type="SMR" id="Q9AB70"/>
<dbReference type="STRING" id="190650.CC_0361"/>
<dbReference type="EnsemblBacteria" id="AAK22348">
    <property type="protein sequence ID" value="AAK22348"/>
    <property type="gene ID" value="CC_0361"/>
</dbReference>
<dbReference type="KEGG" id="ccr:CC_0361"/>
<dbReference type="PATRIC" id="fig|190650.5.peg.364"/>
<dbReference type="eggNOG" id="COG3638">
    <property type="taxonomic scope" value="Bacteria"/>
</dbReference>
<dbReference type="HOGENOM" id="CLU_000604_1_22_5"/>
<dbReference type="BioCyc" id="CAULO:CC0361-MONOMER"/>
<dbReference type="Proteomes" id="UP000001816">
    <property type="component" value="Chromosome"/>
</dbReference>
<dbReference type="GO" id="GO:0005886">
    <property type="term" value="C:plasma membrane"/>
    <property type="evidence" value="ECO:0007669"/>
    <property type="project" value="UniProtKB-SubCell"/>
</dbReference>
<dbReference type="GO" id="GO:0015416">
    <property type="term" value="F:ABC-type phosphonate transporter activity"/>
    <property type="evidence" value="ECO:0007669"/>
    <property type="project" value="UniProtKB-EC"/>
</dbReference>
<dbReference type="GO" id="GO:0005524">
    <property type="term" value="F:ATP binding"/>
    <property type="evidence" value="ECO:0007669"/>
    <property type="project" value="UniProtKB-KW"/>
</dbReference>
<dbReference type="GO" id="GO:0016887">
    <property type="term" value="F:ATP hydrolysis activity"/>
    <property type="evidence" value="ECO:0007669"/>
    <property type="project" value="InterPro"/>
</dbReference>
<dbReference type="CDD" id="cd03256">
    <property type="entry name" value="ABC_PhnC_transporter"/>
    <property type="match status" value="1"/>
</dbReference>
<dbReference type="Gene3D" id="3.40.50.300">
    <property type="entry name" value="P-loop containing nucleotide triphosphate hydrolases"/>
    <property type="match status" value="1"/>
</dbReference>
<dbReference type="InterPro" id="IPR003593">
    <property type="entry name" value="AAA+_ATPase"/>
</dbReference>
<dbReference type="InterPro" id="IPR003439">
    <property type="entry name" value="ABC_transporter-like_ATP-bd"/>
</dbReference>
<dbReference type="InterPro" id="IPR012693">
    <property type="entry name" value="ABC_transpr_PhnC"/>
</dbReference>
<dbReference type="InterPro" id="IPR050086">
    <property type="entry name" value="MetN_ABC_transporter-like"/>
</dbReference>
<dbReference type="InterPro" id="IPR027417">
    <property type="entry name" value="P-loop_NTPase"/>
</dbReference>
<dbReference type="NCBIfam" id="TIGR02315">
    <property type="entry name" value="ABC_phnC"/>
    <property type="match status" value="1"/>
</dbReference>
<dbReference type="PANTHER" id="PTHR43166">
    <property type="entry name" value="AMINO ACID IMPORT ATP-BINDING PROTEIN"/>
    <property type="match status" value="1"/>
</dbReference>
<dbReference type="PANTHER" id="PTHR43166:SF6">
    <property type="entry name" value="PHOSPHONATES IMPORT ATP-BINDING PROTEIN PHNC"/>
    <property type="match status" value="1"/>
</dbReference>
<dbReference type="Pfam" id="PF00005">
    <property type="entry name" value="ABC_tran"/>
    <property type="match status" value="1"/>
</dbReference>
<dbReference type="SMART" id="SM00382">
    <property type="entry name" value="AAA"/>
    <property type="match status" value="1"/>
</dbReference>
<dbReference type="SUPFAM" id="SSF52540">
    <property type="entry name" value="P-loop containing nucleoside triphosphate hydrolases"/>
    <property type="match status" value="1"/>
</dbReference>
<dbReference type="PROSITE" id="PS50893">
    <property type="entry name" value="ABC_TRANSPORTER_2"/>
    <property type="match status" value="1"/>
</dbReference>
<dbReference type="PROSITE" id="PS51249">
    <property type="entry name" value="PHNC"/>
    <property type="match status" value="1"/>
</dbReference>
<comment type="function">
    <text evidence="1">Part of the ABC transporter complex PhnCDE involved in phosphonates import. Responsible for energy coupling to the transport system.</text>
</comment>
<comment type="catalytic activity">
    <reaction evidence="1">
        <text>phosphonate(out) + ATP + H2O = phosphonate(in) + ADP + phosphate + H(+)</text>
        <dbReference type="Rhea" id="RHEA:18065"/>
        <dbReference type="ChEBI" id="CHEBI:15377"/>
        <dbReference type="ChEBI" id="CHEBI:15378"/>
        <dbReference type="ChEBI" id="CHEBI:16215"/>
        <dbReference type="ChEBI" id="CHEBI:30616"/>
        <dbReference type="ChEBI" id="CHEBI:43474"/>
        <dbReference type="ChEBI" id="CHEBI:456216"/>
        <dbReference type="EC" id="7.3.2.2"/>
    </reaction>
</comment>
<comment type="subunit">
    <text evidence="1">The complex is composed of two ATP-binding proteins (PhnC), two transmembrane proteins (PhnE) and a solute-binding protein (PhnD).</text>
</comment>
<comment type="subcellular location">
    <subcellularLocation>
        <location evidence="1">Cell inner membrane</location>
        <topology evidence="1">Peripheral membrane protein</topology>
    </subcellularLocation>
</comment>
<comment type="similarity">
    <text evidence="1">Belongs to the ABC transporter superfamily. Phosphonates importer (TC 3.A.1.9.1) family.</text>
</comment>
<name>PHNC_CAUVC</name>
<reference key="1">
    <citation type="journal article" date="2001" name="Proc. Natl. Acad. Sci. U.S.A.">
        <title>Complete genome sequence of Caulobacter crescentus.</title>
        <authorList>
            <person name="Nierman W.C."/>
            <person name="Feldblyum T.V."/>
            <person name="Laub M.T."/>
            <person name="Paulsen I.T."/>
            <person name="Nelson K.E."/>
            <person name="Eisen J.A."/>
            <person name="Heidelberg J.F."/>
            <person name="Alley M.R.K."/>
            <person name="Ohta N."/>
            <person name="Maddock J.R."/>
            <person name="Potocka I."/>
            <person name="Nelson W.C."/>
            <person name="Newton A."/>
            <person name="Stephens C."/>
            <person name="Phadke N.D."/>
            <person name="Ely B."/>
            <person name="DeBoy R.T."/>
            <person name="Dodson R.J."/>
            <person name="Durkin A.S."/>
            <person name="Gwinn M.L."/>
            <person name="Haft D.H."/>
            <person name="Kolonay J.F."/>
            <person name="Smit J."/>
            <person name="Craven M.B."/>
            <person name="Khouri H.M."/>
            <person name="Shetty J."/>
            <person name="Berry K.J."/>
            <person name="Utterback T.R."/>
            <person name="Tran K."/>
            <person name="Wolf A.M."/>
            <person name="Vamathevan J.J."/>
            <person name="Ermolaeva M.D."/>
            <person name="White O."/>
            <person name="Salzberg S.L."/>
            <person name="Venter J.C."/>
            <person name="Shapiro L."/>
            <person name="Fraser C.M."/>
        </authorList>
    </citation>
    <scope>NUCLEOTIDE SEQUENCE [LARGE SCALE GENOMIC DNA]</scope>
    <source>
        <strain>ATCC 19089 / CIP 103742 / CB 15</strain>
    </source>
</reference>
<protein>
    <recommendedName>
        <fullName evidence="1">Phosphonates import ATP-binding protein PhnC</fullName>
        <ecNumber evidence="1">7.3.2.2</ecNumber>
    </recommendedName>
</protein>